<sequence>MMLDEAVGRRVCCDGERGTVRYVGPVPPTAGVWLGVEWDHPERGKHDGSHDGVRYFTCRHPTGGSFVRPQKASFGVDYVTALKQRYEVEIEEVTAEEMKISSKTVVMVGFENVKKKQSVKNLTEVGLRRCEVSAPGPENEIRNTTPFVQSLDLSGNLLSSWEVLAAITEQLDSLQELHLSHNRLSISSAPSSLSSAFSHLRVLSINSCALTWTQVLHCAPMWQQVEELYLADNNITELLRPEHVLQALTVLDLSNNQIAQETVLEISHLPRLERLNLSSTSLSEIKFSDVPAGKKTTLFPALKELLLDDNNISEWRVVNELEKLPSLVYLSCRRNPLLHKEKNLETARQIMIARLGQLELLDMRQILSDERRGAELDYCKMFGSAWLRAGGHREAEKNNPNTDFMTEHPRYLTLIQKYGAPDEGELREQKPFALKNQLLTITFLCPEDLERKPIEKKLPGSMIVQKVKGLLHRLLKLPGVELKLTYTCAKMADREIEIDNDLKPLQFYSVEDGDKILVRWS</sequence>
<name>TBCE_DANRE</name>
<evidence type="ECO:0000250" key="1"/>
<evidence type="ECO:0000255" key="2">
    <source>
        <dbReference type="PROSITE-ProRule" id="PRU00045"/>
    </source>
</evidence>
<evidence type="ECO:0000305" key="3"/>
<gene>
    <name type="primary">tbce</name>
    <name type="ORF">zgc:123075</name>
</gene>
<proteinExistence type="evidence at transcript level"/>
<keyword id="KW-0143">Chaperone</keyword>
<keyword id="KW-0963">Cytoplasm</keyword>
<keyword id="KW-0206">Cytoskeleton</keyword>
<keyword id="KW-0433">Leucine-rich repeat</keyword>
<keyword id="KW-1185">Reference proteome</keyword>
<keyword id="KW-0677">Repeat</keyword>
<organism>
    <name type="scientific">Danio rerio</name>
    <name type="common">Zebrafish</name>
    <name type="synonym">Brachydanio rerio</name>
    <dbReference type="NCBI Taxonomy" id="7955"/>
    <lineage>
        <taxon>Eukaryota</taxon>
        <taxon>Metazoa</taxon>
        <taxon>Chordata</taxon>
        <taxon>Craniata</taxon>
        <taxon>Vertebrata</taxon>
        <taxon>Euteleostomi</taxon>
        <taxon>Actinopterygii</taxon>
        <taxon>Neopterygii</taxon>
        <taxon>Teleostei</taxon>
        <taxon>Ostariophysi</taxon>
        <taxon>Cypriniformes</taxon>
        <taxon>Danionidae</taxon>
        <taxon>Danioninae</taxon>
        <taxon>Danio</taxon>
    </lineage>
</organism>
<feature type="chain" id="PRO_0000083542" description="Tubulin-specific chaperone E">
    <location>
        <begin position="1"/>
        <end position="521"/>
    </location>
</feature>
<feature type="domain" description="CAP-Gly" evidence="2">
    <location>
        <begin position="24"/>
        <end position="68"/>
    </location>
</feature>
<feature type="repeat" description="LRR 1">
    <location>
        <begin position="147"/>
        <end position="168"/>
    </location>
</feature>
<feature type="repeat" description="LRR 2">
    <location>
        <begin position="173"/>
        <end position="194"/>
    </location>
</feature>
<feature type="repeat" description="LRR 3">
    <location>
        <begin position="199"/>
        <end position="220"/>
    </location>
</feature>
<feature type="repeat" description="LRR 4">
    <location>
        <begin position="224"/>
        <end position="245"/>
    </location>
</feature>
<feature type="repeat" description="LRR 5">
    <location>
        <begin position="247"/>
        <end position="268"/>
    </location>
</feature>
<feature type="repeat" description="LRR 6">
    <location>
        <begin position="271"/>
        <end position="292"/>
    </location>
</feature>
<feature type="repeat" description="LRR 7">
    <location>
        <begin position="301"/>
        <end position="322"/>
    </location>
</feature>
<feature type="domain" description="LRRCT">
    <location>
        <begin position="335"/>
        <end position="377"/>
    </location>
</feature>
<dbReference type="EMBL" id="BC085669">
    <property type="protein sequence ID" value="AAH85669.1"/>
    <property type="status" value="ALT_INIT"/>
    <property type="molecule type" value="mRNA"/>
</dbReference>
<dbReference type="RefSeq" id="NP_001035078.2">
    <property type="nucleotide sequence ID" value="NM_001039989.2"/>
</dbReference>
<dbReference type="RefSeq" id="XP_005155982.1">
    <property type="nucleotide sequence ID" value="XM_005155925.5"/>
</dbReference>
<dbReference type="SMR" id="Q5U378"/>
<dbReference type="FunCoup" id="Q5U378">
    <property type="interactions" value="2679"/>
</dbReference>
<dbReference type="STRING" id="7955.ENSDARP00000132970"/>
<dbReference type="PaxDb" id="7955-ENSDARP00000065584"/>
<dbReference type="Ensembl" id="ENSDART00000160639">
    <property type="protein sequence ID" value="ENSDARP00000131097"/>
    <property type="gene ID" value="ENSDARG00000099921"/>
</dbReference>
<dbReference type="Ensembl" id="ENSDART00000171837">
    <property type="protein sequence ID" value="ENSDARP00000132970"/>
    <property type="gene ID" value="ENSDARG00000099921"/>
</dbReference>
<dbReference type="GeneID" id="664760"/>
<dbReference type="KEGG" id="dre:664760"/>
<dbReference type="AGR" id="ZFIN:ZDB-GENE-051030-120"/>
<dbReference type="CTD" id="6905"/>
<dbReference type="ZFIN" id="ZDB-GENE-051030-120">
    <property type="gene designation" value="tbce"/>
</dbReference>
<dbReference type="eggNOG" id="KOG3207">
    <property type="taxonomic scope" value="Eukaryota"/>
</dbReference>
<dbReference type="HOGENOM" id="CLU_017716_5_0_1"/>
<dbReference type="InParanoid" id="Q5U378"/>
<dbReference type="OMA" id="SEESHMF"/>
<dbReference type="OrthoDB" id="5273213at2759"/>
<dbReference type="PhylomeDB" id="Q5U378"/>
<dbReference type="TreeFam" id="TF313455"/>
<dbReference type="PRO" id="PR:Q5U378"/>
<dbReference type="Proteomes" id="UP000000437">
    <property type="component" value="Chromosome 11"/>
</dbReference>
<dbReference type="Bgee" id="ENSDARG00000099921">
    <property type="expression patterns" value="Expressed in spleen and 25 other cell types or tissues"/>
</dbReference>
<dbReference type="ExpressionAtlas" id="Q5U378">
    <property type="expression patterns" value="baseline and differential"/>
</dbReference>
<dbReference type="GO" id="GO:0005737">
    <property type="term" value="C:cytoplasm"/>
    <property type="evidence" value="ECO:0000318"/>
    <property type="project" value="GO_Central"/>
</dbReference>
<dbReference type="GO" id="GO:0005856">
    <property type="term" value="C:cytoskeleton"/>
    <property type="evidence" value="ECO:0007669"/>
    <property type="project" value="UniProtKB-SubCell"/>
</dbReference>
<dbReference type="GO" id="GO:0043014">
    <property type="term" value="F:alpha-tubulin binding"/>
    <property type="evidence" value="ECO:0000318"/>
    <property type="project" value="GO_Central"/>
</dbReference>
<dbReference type="GO" id="GO:0000226">
    <property type="term" value="P:microtubule cytoskeleton organization"/>
    <property type="evidence" value="ECO:0000318"/>
    <property type="project" value="GO_Central"/>
</dbReference>
<dbReference type="GO" id="GO:0007023">
    <property type="term" value="P:post-chaperonin tubulin folding pathway"/>
    <property type="evidence" value="ECO:0000250"/>
    <property type="project" value="UniProtKB"/>
</dbReference>
<dbReference type="GO" id="GO:0007021">
    <property type="term" value="P:tubulin complex assembly"/>
    <property type="evidence" value="ECO:0000318"/>
    <property type="project" value="GO_Central"/>
</dbReference>
<dbReference type="CDD" id="cd17044">
    <property type="entry name" value="Ubl_TBCE"/>
    <property type="match status" value="1"/>
</dbReference>
<dbReference type="FunFam" id="2.30.30.190:FF:000008">
    <property type="entry name" value="Tubulin-specific chaperone E"/>
    <property type="match status" value="1"/>
</dbReference>
<dbReference type="FunFam" id="3.80.10.10:FF:001017">
    <property type="entry name" value="Tubulin-specific chaperone E"/>
    <property type="match status" value="1"/>
</dbReference>
<dbReference type="Gene3D" id="2.30.30.190">
    <property type="entry name" value="CAP Gly-rich-like domain"/>
    <property type="match status" value="1"/>
</dbReference>
<dbReference type="Gene3D" id="3.10.20.90">
    <property type="entry name" value="Phosphatidylinositol 3-kinase Catalytic Subunit, Chain A, domain 1"/>
    <property type="match status" value="1"/>
</dbReference>
<dbReference type="Gene3D" id="3.80.10.10">
    <property type="entry name" value="Ribonuclease Inhibitor"/>
    <property type="match status" value="2"/>
</dbReference>
<dbReference type="InterPro" id="IPR036859">
    <property type="entry name" value="CAP-Gly_dom_sf"/>
</dbReference>
<dbReference type="InterPro" id="IPR000938">
    <property type="entry name" value="CAP-Gly_domain"/>
</dbReference>
<dbReference type="InterPro" id="IPR001611">
    <property type="entry name" value="Leu-rich_rpt"/>
</dbReference>
<dbReference type="InterPro" id="IPR003591">
    <property type="entry name" value="Leu-rich_rpt_typical-subtyp"/>
</dbReference>
<dbReference type="InterPro" id="IPR032675">
    <property type="entry name" value="LRR_dom_sf"/>
</dbReference>
<dbReference type="InterPro" id="IPR029071">
    <property type="entry name" value="Ubiquitin-like_domsf"/>
</dbReference>
<dbReference type="InterPro" id="IPR044079">
    <property type="entry name" value="Ubl_TBCE"/>
</dbReference>
<dbReference type="PANTHER" id="PTHR15454">
    <property type="entry name" value="NISCHARIN RELATED"/>
    <property type="match status" value="1"/>
</dbReference>
<dbReference type="PANTHER" id="PTHR15454:SF56">
    <property type="entry name" value="PROTEIN PHOSPHATASE 1 REGULATORY SUBUNIT 7-RELATED"/>
    <property type="match status" value="1"/>
</dbReference>
<dbReference type="Pfam" id="PF01302">
    <property type="entry name" value="CAP_GLY"/>
    <property type="match status" value="1"/>
</dbReference>
<dbReference type="Pfam" id="PF00560">
    <property type="entry name" value="LRR_1"/>
    <property type="match status" value="1"/>
</dbReference>
<dbReference type="Pfam" id="PF14580">
    <property type="entry name" value="LRR_9"/>
    <property type="match status" value="1"/>
</dbReference>
<dbReference type="SMART" id="SM01052">
    <property type="entry name" value="CAP_GLY"/>
    <property type="match status" value="1"/>
</dbReference>
<dbReference type="SMART" id="SM00369">
    <property type="entry name" value="LRR_TYP"/>
    <property type="match status" value="4"/>
</dbReference>
<dbReference type="SUPFAM" id="SSF74924">
    <property type="entry name" value="Cap-Gly domain"/>
    <property type="match status" value="1"/>
</dbReference>
<dbReference type="SUPFAM" id="SSF52058">
    <property type="entry name" value="L domain-like"/>
    <property type="match status" value="1"/>
</dbReference>
<dbReference type="SUPFAM" id="SSF54236">
    <property type="entry name" value="Ubiquitin-like"/>
    <property type="match status" value="1"/>
</dbReference>
<dbReference type="PROSITE" id="PS00845">
    <property type="entry name" value="CAP_GLY_1"/>
    <property type="match status" value="1"/>
</dbReference>
<dbReference type="PROSITE" id="PS50245">
    <property type="entry name" value="CAP_GLY_2"/>
    <property type="match status" value="1"/>
</dbReference>
<comment type="function">
    <text>Tubulin-folding protein; involved in the second step of the tubulin folding pathway.</text>
</comment>
<comment type="subunit">
    <text>Supercomplex made of cofactors A to E. Cofactors A and D function by capturing and stabilizing tubulin in a quasi-native conformation. Cofactor E binds to the cofactor D-tubulin complex; interaction with cofactor C then causes the release of tubulin polypeptides that are committed to the native state.</text>
</comment>
<comment type="subcellular location">
    <subcellularLocation>
        <location evidence="1">Cytoplasm</location>
    </subcellularLocation>
    <subcellularLocation>
        <location evidence="1">Cytoplasm</location>
        <location evidence="1">Cytoskeleton</location>
    </subcellularLocation>
</comment>
<comment type="similarity">
    <text evidence="3">Belongs to the TBCE family.</text>
</comment>
<comment type="sequence caution" evidence="3">
    <conflict type="erroneous initiation">
        <sequence resource="EMBL-CDS" id="AAH85669"/>
    </conflict>
</comment>
<reference key="1">
    <citation type="submission" date="2004-11" db="EMBL/GenBank/DDBJ databases">
        <authorList>
            <consortium name="NIH - Zebrafish Gene Collection (ZGC) project"/>
        </authorList>
    </citation>
    <scope>NUCLEOTIDE SEQUENCE [LARGE SCALE MRNA]</scope>
</reference>
<protein>
    <recommendedName>
        <fullName>Tubulin-specific chaperone E</fullName>
    </recommendedName>
    <alternativeName>
        <fullName>Tubulin-folding cofactor E</fullName>
    </alternativeName>
</protein>
<accession>Q5U378</accession>